<protein>
    <recommendedName>
        <fullName evidence="1">Protoheme IX farnesyltransferase</fullName>
        <ecNumber evidence="1">2.5.1.141</ecNumber>
    </recommendedName>
    <alternativeName>
        <fullName evidence="1">Heme B farnesyltransferase</fullName>
    </alternativeName>
    <alternativeName>
        <fullName evidence="1">Heme O synthase</fullName>
    </alternativeName>
</protein>
<keyword id="KW-1003">Cell membrane</keyword>
<keyword id="KW-0350">Heme biosynthesis</keyword>
<keyword id="KW-0472">Membrane</keyword>
<keyword id="KW-0808">Transferase</keyword>
<keyword id="KW-0812">Transmembrane</keyword>
<keyword id="KW-1133">Transmembrane helix</keyword>
<comment type="function">
    <text evidence="1">Converts heme B (protoheme IX) to heme O by substitution of the vinyl group on carbon 2 of heme B porphyrin ring with a hydroxyethyl farnesyl side group.</text>
</comment>
<comment type="catalytic activity">
    <reaction evidence="1">
        <text>heme b + (2E,6E)-farnesyl diphosphate + H2O = Fe(II)-heme o + diphosphate</text>
        <dbReference type="Rhea" id="RHEA:28070"/>
        <dbReference type="ChEBI" id="CHEBI:15377"/>
        <dbReference type="ChEBI" id="CHEBI:33019"/>
        <dbReference type="ChEBI" id="CHEBI:60344"/>
        <dbReference type="ChEBI" id="CHEBI:60530"/>
        <dbReference type="ChEBI" id="CHEBI:175763"/>
        <dbReference type="EC" id="2.5.1.141"/>
    </reaction>
</comment>
<comment type="pathway">
    <text evidence="1">Porphyrin-containing compound metabolism; heme O biosynthesis; heme O from protoheme: step 1/1.</text>
</comment>
<comment type="subunit">
    <text evidence="1">Interacts with CtaA.</text>
</comment>
<comment type="subcellular location">
    <subcellularLocation>
        <location evidence="1">Cell membrane</location>
        <topology evidence="1">Multi-pass membrane protein</topology>
    </subcellularLocation>
</comment>
<comment type="miscellaneous">
    <text evidence="1">Carbon 2 of the heme B porphyrin ring is defined according to the Fischer nomenclature.</text>
</comment>
<comment type="similarity">
    <text evidence="1">Belongs to the UbiA prenyltransferase family. Protoheme IX farnesyltransferase subfamily.</text>
</comment>
<name>COXX_STAA9</name>
<reference key="1">
    <citation type="submission" date="2007-05" db="EMBL/GenBank/DDBJ databases">
        <title>Complete sequence of chromosome of Staphylococcus aureus subsp. aureus JH9.</title>
        <authorList>
            <consortium name="US DOE Joint Genome Institute"/>
            <person name="Copeland A."/>
            <person name="Lucas S."/>
            <person name="Lapidus A."/>
            <person name="Barry K."/>
            <person name="Detter J.C."/>
            <person name="Glavina del Rio T."/>
            <person name="Hammon N."/>
            <person name="Israni S."/>
            <person name="Pitluck S."/>
            <person name="Chain P."/>
            <person name="Malfatti S."/>
            <person name="Shin M."/>
            <person name="Vergez L."/>
            <person name="Schmutz J."/>
            <person name="Larimer F."/>
            <person name="Land M."/>
            <person name="Hauser L."/>
            <person name="Kyrpides N."/>
            <person name="Kim E."/>
            <person name="Tomasz A."/>
            <person name="Richardson P."/>
        </authorList>
    </citation>
    <scope>NUCLEOTIDE SEQUENCE [LARGE SCALE GENOMIC DNA]</scope>
    <source>
        <strain>JH9</strain>
    </source>
</reference>
<accession>A5IS03</accession>
<feature type="chain" id="PRO_0000346075" description="Protoheme IX farnesyltransferase">
    <location>
        <begin position="1"/>
        <end position="303"/>
    </location>
</feature>
<feature type="transmembrane region" description="Helical" evidence="1">
    <location>
        <begin position="25"/>
        <end position="45"/>
    </location>
</feature>
<feature type="transmembrane region" description="Helical" evidence="1">
    <location>
        <begin position="54"/>
        <end position="74"/>
    </location>
</feature>
<feature type="transmembrane region" description="Helical" evidence="1">
    <location>
        <begin position="104"/>
        <end position="124"/>
    </location>
</feature>
<feature type="transmembrane region" description="Helical" evidence="1">
    <location>
        <begin position="125"/>
        <end position="145"/>
    </location>
</feature>
<feature type="transmembrane region" description="Helical" evidence="1">
    <location>
        <begin position="151"/>
        <end position="171"/>
    </location>
</feature>
<feature type="transmembrane region" description="Helical" evidence="1">
    <location>
        <begin position="179"/>
        <end position="199"/>
    </location>
</feature>
<feature type="transmembrane region" description="Helical" evidence="1">
    <location>
        <begin position="227"/>
        <end position="247"/>
    </location>
</feature>
<feature type="transmembrane region" description="Helical" evidence="1">
    <location>
        <begin position="248"/>
        <end position="268"/>
    </location>
</feature>
<feature type="transmembrane region" description="Helical" evidence="1">
    <location>
        <begin position="280"/>
        <end position="300"/>
    </location>
</feature>
<sequence>MSKEHTLSQNISRVNFKELQQIIKMGLVQGNLIPAFAGAWLAVVMTNHSFLSSIPQILLMLFGSTLIMGGACALNNYYDQDIDRIMPSKQNRPTVNNRITDQNLLLLSFGMMLVGEICLFLLNIPSGVLGLMGIVGYVSYYSIWSKRHTTWNTVIGSFPGAVPPLIGWVAIEGQISLTAIALFLVVFCWQPIHFYALAIKRKDEYALANIPMLPSVKGFKRTRVSMFIWLIILLPVPLLLINLGVVFVVLATLLNLGWIALGLTTFKKNSDQTKWATQMFIYSLNYLVIFFVLAVIVSLLTLI</sequence>
<proteinExistence type="inferred from homology"/>
<gene>
    <name evidence="1" type="primary">ctaB</name>
    <name type="ordered locus">SaurJH9_1176</name>
</gene>
<organism>
    <name type="scientific">Staphylococcus aureus (strain JH9)</name>
    <dbReference type="NCBI Taxonomy" id="359786"/>
    <lineage>
        <taxon>Bacteria</taxon>
        <taxon>Bacillati</taxon>
        <taxon>Bacillota</taxon>
        <taxon>Bacilli</taxon>
        <taxon>Bacillales</taxon>
        <taxon>Staphylococcaceae</taxon>
        <taxon>Staphylococcus</taxon>
    </lineage>
</organism>
<dbReference type="EC" id="2.5.1.141" evidence="1"/>
<dbReference type="EMBL" id="CP000703">
    <property type="protein sequence ID" value="ABQ48976.1"/>
    <property type="molecule type" value="Genomic_DNA"/>
</dbReference>
<dbReference type="SMR" id="A5IS03"/>
<dbReference type="KEGG" id="saj:SaurJH9_1176"/>
<dbReference type="HOGENOM" id="CLU_029631_0_0_9"/>
<dbReference type="UniPathway" id="UPA00834">
    <property type="reaction ID" value="UER00712"/>
</dbReference>
<dbReference type="GO" id="GO:0005886">
    <property type="term" value="C:plasma membrane"/>
    <property type="evidence" value="ECO:0007669"/>
    <property type="project" value="UniProtKB-SubCell"/>
</dbReference>
<dbReference type="GO" id="GO:0008495">
    <property type="term" value="F:protoheme IX farnesyltransferase activity"/>
    <property type="evidence" value="ECO:0007669"/>
    <property type="project" value="UniProtKB-UniRule"/>
</dbReference>
<dbReference type="GO" id="GO:0048034">
    <property type="term" value="P:heme O biosynthetic process"/>
    <property type="evidence" value="ECO:0007669"/>
    <property type="project" value="UniProtKB-UniRule"/>
</dbReference>
<dbReference type="CDD" id="cd13957">
    <property type="entry name" value="PT_UbiA_Cox10"/>
    <property type="match status" value="1"/>
</dbReference>
<dbReference type="Gene3D" id="1.10.357.140">
    <property type="entry name" value="UbiA prenyltransferase"/>
    <property type="match status" value="1"/>
</dbReference>
<dbReference type="HAMAP" id="MF_00154">
    <property type="entry name" value="CyoE_CtaB"/>
    <property type="match status" value="1"/>
</dbReference>
<dbReference type="InterPro" id="IPR006369">
    <property type="entry name" value="Protohaem_IX_farnesylTrfase"/>
</dbReference>
<dbReference type="InterPro" id="IPR000537">
    <property type="entry name" value="UbiA_prenyltransferase"/>
</dbReference>
<dbReference type="InterPro" id="IPR044878">
    <property type="entry name" value="UbiA_sf"/>
</dbReference>
<dbReference type="NCBIfam" id="TIGR01473">
    <property type="entry name" value="cyoE_ctaB"/>
    <property type="match status" value="1"/>
</dbReference>
<dbReference type="PANTHER" id="PTHR43448">
    <property type="entry name" value="PROTOHEME IX FARNESYLTRANSFERASE, MITOCHONDRIAL"/>
    <property type="match status" value="1"/>
</dbReference>
<dbReference type="PANTHER" id="PTHR43448:SF2">
    <property type="entry name" value="PROTOHEME IX FARNESYLTRANSFERASE, MITOCHONDRIAL"/>
    <property type="match status" value="1"/>
</dbReference>
<dbReference type="Pfam" id="PF01040">
    <property type="entry name" value="UbiA"/>
    <property type="match status" value="1"/>
</dbReference>
<evidence type="ECO:0000255" key="1">
    <source>
        <dbReference type="HAMAP-Rule" id="MF_00154"/>
    </source>
</evidence>